<name>CCL2_MACMU</name>
<gene>
    <name type="primary">CCL2</name>
    <name type="synonym">MCP1</name>
    <name type="synonym">SCYA2</name>
</gene>
<keyword id="KW-0145">Chemotaxis</keyword>
<keyword id="KW-0202">Cytokine</keyword>
<keyword id="KW-1015">Disulfide bond</keyword>
<keyword id="KW-0325">Glycoprotein</keyword>
<keyword id="KW-0395">Inflammatory response</keyword>
<keyword id="KW-0873">Pyrrolidone carboxylic acid</keyword>
<keyword id="KW-1185">Reference proteome</keyword>
<keyword id="KW-0964">Secreted</keyword>
<keyword id="KW-0732">Signal</keyword>
<sequence length="99" mass="11007">MKVSAALLCLLLIAATFSPQGLAQPDAINAPVTCCYNFTNRKISVQRLASYRRITSSKCPKEAVIFKTIVAKEICADPKQKWVQDSMDHLDKQIQTPKP</sequence>
<accession>P61275</accession>
<accession>Q9MYN4</accession>
<reference key="1">
    <citation type="submission" date="2000-04" db="EMBL/GenBank/DDBJ databases">
        <title>Cloning and expression of rhesus monkey monocyte chemoattractant protein-1.</title>
        <authorList>
            <person name="Studer C."/>
            <person name="Urfer R."/>
        </authorList>
    </citation>
    <scope>NUCLEOTIDE SEQUENCE [MRNA]</scope>
</reference>
<feature type="signal peptide" evidence="1">
    <location>
        <begin position="1"/>
        <end position="23"/>
    </location>
</feature>
<feature type="chain" id="PRO_0000005148" description="C-C motif chemokine 2">
    <location>
        <begin position="24"/>
        <end position="99"/>
    </location>
</feature>
<feature type="modified residue" description="Pyrrolidone carboxylic acid" evidence="3">
    <location>
        <position position="24"/>
    </location>
</feature>
<feature type="glycosylation site" description="N-linked (GlcNAc...) asparagine" evidence="4">
    <location>
        <position position="37"/>
    </location>
</feature>
<feature type="disulfide bond" evidence="1">
    <location>
        <begin position="34"/>
        <end position="59"/>
    </location>
</feature>
<feature type="disulfide bond" evidence="1">
    <location>
        <begin position="35"/>
        <end position="75"/>
    </location>
</feature>
<evidence type="ECO:0000250" key="1"/>
<evidence type="ECO:0000250" key="2">
    <source>
        <dbReference type="UniProtKB" id="P10148"/>
    </source>
</evidence>
<evidence type="ECO:0000250" key="3">
    <source>
        <dbReference type="UniProtKB" id="P13500"/>
    </source>
</evidence>
<evidence type="ECO:0000255" key="4"/>
<evidence type="ECO:0000305" key="5"/>
<dbReference type="EMBL" id="AF255343">
    <property type="protein sequence ID" value="AAF67756.1"/>
    <property type="molecule type" value="mRNA"/>
</dbReference>
<dbReference type="RefSeq" id="NP_001027993.1">
    <property type="nucleotide sequence ID" value="NM_001032821.1"/>
</dbReference>
<dbReference type="SMR" id="P61275"/>
<dbReference type="FunCoup" id="P61275">
    <property type="interactions" value="949"/>
</dbReference>
<dbReference type="STRING" id="9544.ENSMMUP00000000391"/>
<dbReference type="GlyCosmos" id="P61275">
    <property type="glycosylation" value="1 site, No reported glycans"/>
</dbReference>
<dbReference type="PaxDb" id="9544-ENSMMUP00000000391"/>
<dbReference type="GeneID" id="574138"/>
<dbReference type="KEGG" id="mcc:574138"/>
<dbReference type="CTD" id="6347"/>
<dbReference type="eggNOG" id="ENOG502S6ZP">
    <property type="taxonomic scope" value="Eukaryota"/>
</dbReference>
<dbReference type="HOGENOM" id="CLU_141716_1_0_1"/>
<dbReference type="InParanoid" id="P61275"/>
<dbReference type="OrthoDB" id="8934837at2759"/>
<dbReference type="TreeFam" id="TF334888"/>
<dbReference type="Proteomes" id="UP000006718">
    <property type="component" value="Unassembled WGS sequence"/>
</dbReference>
<dbReference type="GO" id="GO:0005615">
    <property type="term" value="C:extracellular space"/>
    <property type="evidence" value="ECO:0000318"/>
    <property type="project" value="GO_Central"/>
</dbReference>
<dbReference type="GO" id="GO:0048020">
    <property type="term" value="F:CCR chemokine receptor binding"/>
    <property type="evidence" value="ECO:0000318"/>
    <property type="project" value="GO_Central"/>
</dbReference>
<dbReference type="GO" id="GO:0008009">
    <property type="term" value="F:chemokine activity"/>
    <property type="evidence" value="ECO:0000318"/>
    <property type="project" value="GO_Central"/>
</dbReference>
<dbReference type="GO" id="GO:0061844">
    <property type="term" value="P:antimicrobial humoral immune response mediated by antimicrobial peptide"/>
    <property type="evidence" value="ECO:0000318"/>
    <property type="project" value="GO_Central"/>
</dbReference>
<dbReference type="GO" id="GO:0070098">
    <property type="term" value="P:chemokine-mediated signaling pathway"/>
    <property type="evidence" value="ECO:0000318"/>
    <property type="project" value="GO_Central"/>
</dbReference>
<dbReference type="GO" id="GO:0048245">
    <property type="term" value="P:eosinophil chemotaxis"/>
    <property type="evidence" value="ECO:0000318"/>
    <property type="project" value="GO_Central"/>
</dbReference>
<dbReference type="GO" id="GO:0006954">
    <property type="term" value="P:inflammatory response"/>
    <property type="evidence" value="ECO:0000318"/>
    <property type="project" value="GO_Central"/>
</dbReference>
<dbReference type="GO" id="GO:0030335">
    <property type="term" value="P:positive regulation of cell migration"/>
    <property type="evidence" value="ECO:0000318"/>
    <property type="project" value="GO_Central"/>
</dbReference>
<dbReference type="GO" id="GO:0051968">
    <property type="term" value="P:positive regulation of synaptic transmission, glutamatergic"/>
    <property type="evidence" value="ECO:0000250"/>
    <property type="project" value="UniProtKB"/>
</dbReference>
<dbReference type="GO" id="GO:0019233">
    <property type="term" value="P:sensory perception of pain"/>
    <property type="evidence" value="ECO:0000250"/>
    <property type="project" value="UniProtKB"/>
</dbReference>
<dbReference type="CDD" id="cd00272">
    <property type="entry name" value="Chemokine_CC"/>
    <property type="match status" value="1"/>
</dbReference>
<dbReference type="FunFam" id="2.40.50.40:FF:000002">
    <property type="entry name" value="C-C motif chemokine"/>
    <property type="match status" value="1"/>
</dbReference>
<dbReference type="Gene3D" id="2.40.50.40">
    <property type="match status" value="1"/>
</dbReference>
<dbReference type="InterPro" id="IPR039809">
    <property type="entry name" value="Chemokine_b/g/d"/>
</dbReference>
<dbReference type="InterPro" id="IPR000827">
    <property type="entry name" value="Chemokine_CC_CS"/>
</dbReference>
<dbReference type="InterPro" id="IPR001811">
    <property type="entry name" value="Chemokine_IL8-like_dom"/>
</dbReference>
<dbReference type="InterPro" id="IPR036048">
    <property type="entry name" value="Interleukin_8-like_sf"/>
</dbReference>
<dbReference type="PANTHER" id="PTHR12015:SF98">
    <property type="entry name" value="C-C MOTIF CHEMOKINE 2"/>
    <property type="match status" value="1"/>
</dbReference>
<dbReference type="PANTHER" id="PTHR12015">
    <property type="entry name" value="SMALL INDUCIBLE CYTOKINE A"/>
    <property type="match status" value="1"/>
</dbReference>
<dbReference type="Pfam" id="PF00048">
    <property type="entry name" value="IL8"/>
    <property type="match status" value="1"/>
</dbReference>
<dbReference type="SMART" id="SM00199">
    <property type="entry name" value="SCY"/>
    <property type="match status" value="1"/>
</dbReference>
<dbReference type="SUPFAM" id="SSF54117">
    <property type="entry name" value="Interleukin 8-like chemokines"/>
    <property type="match status" value="1"/>
</dbReference>
<dbReference type="PROSITE" id="PS00472">
    <property type="entry name" value="SMALL_CYTOKINES_CC"/>
    <property type="match status" value="1"/>
</dbReference>
<protein>
    <recommendedName>
        <fullName>C-C motif chemokine 2</fullName>
    </recommendedName>
    <alternativeName>
        <fullName>Monocyte chemoattractant protein 1</fullName>
    </alternativeName>
    <alternativeName>
        <fullName>Monocyte chemotactic protein 1</fullName>
        <shortName>MCP-1</shortName>
    </alternativeName>
    <alternativeName>
        <fullName>Small-inducible cytokine A2</fullName>
    </alternativeName>
</protein>
<proteinExistence type="inferred from homology"/>
<organism>
    <name type="scientific">Macaca mulatta</name>
    <name type="common">Rhesus macaque</name>
    <dbReference type="NCBI Taxonomy" id="9544"/>
    <lineage>
        <taxon>Eukaryota</taxon>
        <taxon>Metazoa</taxon>
        <taxon>Chordata</taxon>
        <taxon>Craniata</taxon>
        <taxon>Vertebrata</taxon>
        <taxon>Euteleostomi</taxon>
        <taxon>Mammalia</taxon>
        <taxon>Eutheria</taxon>
        <taxon>Euarchontoglires</taxon>
        <taxon>Primates</taxon>
        <taxon>Haplorrhini</taxon>
        <taxon>Catarrhini</taxon>
        <taxon>Cercopithecidae</taxon>
        <taxon>Cercopithecinae</taxon>
        <taxon>Macaca</taxon>
    </lineage>
</organism>
<comment type="function">
    <text evidence="2 3">Acts as a ligand for C-C chemokine receptor CCR2 (By similarity). Signals through binding and activation of CCR2 and induces a strong chemotactic response and mobilization of intracellular calcium ions (By similarity). Exhibits a chemotactic activity for monocytes and basophils but not neutrophils or eosinophils (By similarity). Plays an important role in mediating peripheral nerve injury-induced neuropathic pain (By similarity). Increases NMDA-mediated synaptic transmission in both dopamine D1 and D2 receptor-containing neurons, which may be caused by MAPK/ERK-dependent phosphorylation of GRIN2B/NMDAR2B (By similarity).</text>
</comment>
<comment type="subunit">
    <text evidence="3">Monomer or homodimer; in equilibrium. Is tethered on endothelial cells by glycosaminoglycan (GAG) side chains of proteoglycans. Interacts with TNFAIP6 (via Link domain).</text>
</comment>
<comment type="subcellular location">
    <subcellularLocation>
        <location evidence="3">Secreted</location>
    </subcellularLocation>
</comment>
<comment type="PTM">
    <text evidence="3">Processing at the N-terminus can regulate receptor and target cell selectivity (By similarity). Deletion of the N-terminal residue converts it from an activator of basophil to an eosinophil chemoattractant (By similarity).</text>
</comment>
<comment type="PTM">
    <text evidence="3">N-Glycosylated.</text>
</comment>
<comment type="similarity">
    <text evidence="5">Belongs to the intercrine beta (chemokine CC) family.</text>
</comment>